<accession>Q04L36</accession>
<protein>
    <recommendedName>
        <fullName evidence="1">Probable tRNA sulfurtransferase</fullName>
        <ecNumber evidence="1">2.8.1.4</ecNumber>
    </recommendedName>
    <alternativeName>
        <fullName evidence="1">Sulfur carrier protein ThiS sulfurtransferase</fullName>
    </alternativeName>
    <alternativeName>
        <fullName evidence="1">Thiamine biosynthesis protein ThiI</fullName>
    </alternativeName>
    <alternativeName>
        <fullName evidence="1">tRNA 4-thiouridine synthase</fullName>
    </alternativeName>
</protein>
<feature type="chain" id="PRO_1000074294" description="Probable tRNA sulfurtransferase">
    <location>
        <begin position="1"/>
        <end position="404"/>
    </location>
</feature>
<feature type="domain" description="THUMP" evidence="1">
    <location>
        <begin position="60"/>
        <end position="165"/>
    </location>
</feature>
<feature type="binding site" evidence="1">
    <location>
        <begin position="183"/>
        <end position="184"/>
    </location>
    <ligand>
        <name>ATP</name>
        <dbReference type="ChEBI" id="CHEBI:30616"/>
    </ligand>
</feature>
<feature type="binding site" evidence="1">
    <location>
        <begin position="208"/>
        <end position="209"/>
    </location>
    <ligand>
        <name>ATP</name>
        <dbReference type="ChEBI" id="CHEBI:30616"/>
    </ligand>
</feature>
<feature type="binding site" evidence="1">
    <location>
        <position position="265"/>
    </location>
    <ligand>
        <name>ATP</name>
        <dbReference type="ChEBI" id="CHEBI:30616"/>
    </ligand>
</feature>
<feature type="binding site" evidence="1">
    <location>
        <position position="287"/>
    </location>
    <ligand>
        <name>ATP</name>
        <dbReference type="ChEBI" id="CHEBI:30616"/>
    </ligand>
</feature>
<feature type="binding site" evidence="1">
    <location>
        <position position="296"/>
    </location>
    <ligand>
        <name>ATP</name>
        <dbReference type="ChEBI" id="CHEBI:30616"/>
    </ligand>
</feature>
<name>THII_STRP2</name>
<comment type="function">
    <text evidence="1">Catalyzes the ATP-dependent transfer of a sulfur to tRNA to produce 4-thiouridine in position 8 of tRNAs, which functions as a near-UV photosensor. Also catalyzes the transfer of sulfur to the sulfur carrier protein ThiS, forming ThiS-thiocarboxylate. This is a step in the synthesis of thiazole, in the thiamine biosynthesis pathway. The sulfur is donated as persulfide by IscS.</text>
</comment>
<comment type="catalytic activity">
    <reaction evidence="1">
        <text>[ThiI sulfur-carrier protein]-S-sulfanyl-L-cysteine + a uridine in tRNA + 2 reduced [2Fe-2S]-[ferredoxin] + ATP + H(+) = [ThiI sulfur-carrier protein]-L-cysteine + a 4-thiouridine in tRNA + 2 oxidized [2Fe-2S]-[ferredoxin] + AMP + diphosphate</text>
        <dbReference type="Rhea" id="RHEA:24176"/>
        <dbReference type="Rhea" id="RHEA-COMP:10000"/>
        <dbReference type="Rhea" id="RHEA-COMP:10001"/>
        <dbReference type="Rhea" id="RHEA-COMP:13337"/>
        <dbReference type="Rhea" id="RHEA-COMP:13338"/>
        <dbReference type="Rhea" id="RHEA-COMP:13339"/>
        <dbReference type="Rhea" id="RHEA-COMP:13340"/>
        <dbReference type="ChEBI" id="CHEBI:15378"/>
        <dbReference type="ChEBI" id="CHEBI:29950"/>
        <dbReference type="ChEBI" id="CHEBI:30616"/>
        <dbReference type="ChEBI" id="CHEBI:33019"/>
        <dbReference type="ChEBI" id="CHEBI:33737"/>
        <dbReference type="ChEBI" id="CHEBI:33738"/>
        <dbReference type="ChEBI" id="CHEBI:61963"/>
        <dbReference type="ChEBI" id="CHEBI:65315"/>
        <dbReference type="ChEBI" id="CHEBI:136798"/>
        <dbReference type="ChEBI" id="CHEBI:456215"/>
        <dbReference type="EC" id="2.8.1.4"/>
    </reaction>
</comment>
<comment type="catalytic activity">
    <reaction evidence="1">
        <text>[ThiS sulfur-carrier protein]-C-terminal Gly-Gly-AMP + S-sulfanyl-L-cysteinyl-[cysteine desulfurase] + AH2 = [ThiS sulfur-carrier protein]-C-terminal-Gly-aminoethanethioate + L-cysteinyl-[cysteine desulfurase] + A + AMP + 2 H(+)</text>
        <dbReference type="Rhea" id="RHEA:43340"/>
        <dbReference type="Rhea" id="RHEA-COMP:12157"/>
        <dbReference type="Rhea" id="RHEA-COMP:12158"/>
        <dbReference type="Rhea" id="RHEA-COMP:12910"/>
        <dbReference type="Rhea" id="RHEA-COMP:19908"/>
        <dbReference type="ChEBI" id="CHEBI:13193"/>
        <dbReference type="ChEBI" id="CHEBI:15378"/>
        <dbReference type="ChEBI" id="CHEBI:17499"/>
        <dbReference type="ChEBI" id="CHEBI:29950"/>
        <dbReference type="ChEBI" id="CHEBI:61963"/>
        <dbReference type="ChEBI" id="CHEBI:90618"/>
        <dbReference type="ChEBI" id="CHEBI:232372"/>
        <dbReference type="ChEBI" id="CHEBI:456215"/>
    </reaction>
</comment>
<comment type="pathway">
    <text evidence="1">Cofactor biosynthesis; thiamine diphosphate biosynthesis.</text>
</comment>
<comment type="subcellular location">
    <subcellularLocation>
        <location evidence="1">Cytoplasm</location>
    </subcellularLocation>
</comment>
<comment type="similarity">
    <text evidence="1">Belongs to the ThiI family.</text>
</comment>
<keyword id="KW-0067">ATP-binding</keyword>
<keyword id="KW-0963">Cytoplasm</keyword>
<keyword id="KW-0547">Nucleotide-binding</keyword>
<keyword id="KW-1185">Reference proteome</keyword>
<keyword id="KW-0694">RNA-binding</keyword>
<keyword id="KW-0784">Thiamine biosynthesis</keyword>
<keyword id="KW-0808">Transferase</keyword>
<keyword id="KW-0820">tRNA-binding</keyword>
<gene>
    <name evidence="1" type="primary">thiI</name>
    <name type="ordered locus">SPD_0777</name>
</gene>
<proteinExistence type="inferred from homology"/>
<evidence type="ECO:0000255" key="1">
    <source>
        <dbReference type="HAMAP-Rule" id="MF_00021"/>
    </source>
</evidence>
<reference key="1">
    <citation type="journal article" date="2007" name="J. Bacteriol.">
        <title>Genome sequence of Avery's virulent serotype 2 strain D39 of Streptococcus pneumoniae and comparison with that of unencapsulated laboratory strain R6.</title>
        <authorList>
            <person name="Lanie J.A."/>
            <person name="Ng W.-L."/>
            <person name="Kazmierczak K.M."/>
            <person name="Andrzejewski T.M."/>
            <person name="Davidsen T.M."/>
            <person name="Wayne K.J."/>
            <person name="Tettelin H."/>
            <person name="Glass J.I."/>
            <person name="Winkler M.E."/>
        </authorList>
    </citation>
    <scope>NUCLEOTIDE SEQUENCE [LARGE SCALE GENOMIC DNA]</scope>
    <source>
        <strain>D39 / NCTC 7466</strain>
    </source>
</reference>
<sequence length="404" mass="45147">MQYSEIMIRYGELSTKGKNRMRFINKLRNNISDVLSIYSQVKVTADRDRAHAYLNGADYTAVAESLKQVFGIQNFSPVYKVEKSVEVLKSSVQEIMRDIYKEGMTFKISSKRSDHNFELDSRELNQTLGGAVFEAIPNVQVQMKSPDINLQVEIREEAAYLSYETIRGAGGLPVGTSGKGMLMLSGGIDSPVAGYLALKRGVDIEAVHFASPPYTSPGALKKAQDLTRKLTKFGGNIQFIEVPFTEIQEEIKAKAPEAYLMTLTRRFMMRITDRIREVRNGLVIINGESLGQVASQTLESMKAINAVTNTPIIRPVVTMDKLEIIDIAQEIDTFDISIQPFEDCCTIFAPDRPKTNPKIKNAEQYEARMDVEGLVERAVAGIMITEITPQAEKDEVDDLIDNLL</sequence>
<organism>
    <name type="scientific">Streptococcus pneumoniae serotype 2 (strain D39 / NCTC 7466)</name>
    <dbReference type="NCBI Taxonomy" id="373153"/>
    <lineage>
        <taxon>Bacteria</taxon>
        <taxon>Bacillati</taxon>
        <taxon>Bacillota</taxon>
        <taxon>Bacilli</taxon>
        <taxon>Lactobacillales</taxon>
        <taxon>Streptococcaceae</taxon>
        <taxon>Streptococcus</taxon>
    </lineage>
</organism>
<dbReference type="EC" id="2.8.1.4" evidence="1"/>
<dbReference type="EMBL" id="CP000410">
    <property type="protein sequence ID" value="ABJ54955.1"/>
    <property type="molecule type" value="Genomic_DNA"/>
</dbReference>
<dbReference type="RefSeq" id="WP_001200076.1">
    <property type="nucleotide sequence ID" value="NZ_JAMLJR010000004.1"/>
</dbReference>
<dbReference type="SMR" id="Q04L36"/>
<dbReference type="PaxDb" id="373153-SPD_0777"/>
<dbReference type="KEGG" id="spd:SPD_0777"/>
<dbReference type="eggNOG" id="COG0301">
    <property type="taxonomic scope" value="Bacteria"/>
</dbReference>
<dbReference type="HOGENOM" id="CLU_037952_4_0_9"/>
<dbReference type="BioCyc" id="SPNE373153:G1G6V-852-MONOMER"/>
<dbReference type="UniPathway" id="UPA00060"/>
<dbReference type="Proteomes" id="UP000001452">
    <property type="component" value="Chromosome"/>
</dbReference>
<dbReference type="GO" id="GO:0005829">
    <property type="term" value="C:cytosol"/>
    <property type="evidence" value="ECO:0007669"/>
    <property type="project" value="TreeGrafter"/>
</dbReference>
<dbReference type="GO" id="GO:0005524">
    <property type="term" value="F:ATP binding"/>
    <property type="evidence" value="ECO:0007669"/>
    <property type="project" value="UniProtKB-UniRule"/>
</dbReference>
<dbReference type="GO" id="GO:0004810">
    <property type="term" value="F:CCA tRNA nucleotidyltransferase activity"/>
    <property type="evidence" value="ECO:0007669"/>
    <property type="project" value="InterPro"/>
</dbReference>
<dbReference type="GO" id="GO:0000049">
    <property type="term" value="F:tRNA binding"/>
    <property type="evidence" value="ECO:0007669"/>
    <property type="project" value="UniProtKB-UniRule"/>
</dbReference>
<dbReference type="GO" id="GO:0140741">
    <property type="term" value="F:tRNA-uracil-4 sulfurtransferase activity"/>
    <property type="evidence" value="ECO:0007669"/>
    <property type="project" value="UniProtKB-EC"/>
</dbReference>
<dbReference type="GO" id="GO:0009228">
    <property type="term" value="P:thiamine biosynthetic process"/>
    <property type="evidence" value="ECO:0007669"/>
    <property type="project" value="UniProtKB-KW"/>
</dbReference>
<dbReference type="GO" id="GO:0009229">
    <property type="term" value="P:thiamine diphosphate biosynthetic process"/>
    <property type="evidence" value="ECO:0007669"/>
    <property type="project" value="UniProtKB-UniRule"/>
</dbReference>
<dbReference type="GO" id="GO:0052837">
    <property type="term" value="P:thiazole biosynthetic process"/>
    <property type="evidence" value="ECO:0007669"/>
    <property type="project" value="TreeGrafter"/>
</dbReference>
<dbReference type="GO" id="GO:0002937">
    <property type="term" value="P:tRNA 4-thiouridine biosynthesis"/>
    <property type="evidence" value="ECO:0007669"/>
    <property type="project" value="TreeGrafter"/>
</dbReference>
<dbReference type="CDD" id="cd01712">
    <property type="entry name" value="PPase_ThiI"/>
    <property type="match status" value="1"/>
</dbReference>
<dbReference type="CDD" id="cd11716">
    <property type="entry name" value="THUMP_ThiI"/>
    <property type="match status" value="1"/>
</dbReference>
<dbReference type="FunFam" id="3.30.2130.30:FF:000006">
    <property type="entry name" value="Probable tRNA sulfurtransferase"/>
    <property type="match status" value="1"/>
</dbReference>
<dbReference type="FunFam" id="3.40.50.620:FF:000053">
    <property type="entry name" value="Probable tRNA sulfurtransferase"/>
    <property type="match status" value="1"/>
</dbReference>
<dbReference type="Gene3D" id="3.30.2130.30">
    <property type="match status" value="1"/>
</dbReference>
<dbReference type="Gene3D" id="3.40.50.620">
    <property type="entry name" value="HUPs"/>
    <property type="match status" value="1"/>
</dbReference>
<dbReference type="HAMAP" id="MF_00021">
    <property type="entry name" value="ThiI"/>
    <property type="match status" value="1"/>
</dbReference>
<dbReference type="InterPro" id="IPR014729">
    <property type="entry name" value="Rossmann-like_a/b/a_fold"/>
</dbReference>
<dbReference type="InterPro" id="IPR020536">
    <property type="entry name" value="ThiI_AANH"/>
</dbReference>
<dbReference type="InterPro" id="IPR054173">
    <property type="entry name" value="ThiI_fer"/>
</dbReference>
<dbReference type="InterPro" id="IPR049961">
    <property type="entry name" value="ThiI_N"/>
</dbReference>
<dbReference type="InterPro" id="IPR004114">
    <property type="entry name" value="THUMP_dom"/>
</dbReference>
<dbReference type="InterPro" id="IPR049962">
    <property type="entry name" value="THUMP_ThiI"/>
</dbReference>
<dbReference type="InterPro" id="IPR003720">
    <property type="entry name" value="tRNA_STrfase"/>
</dbReference>
<dbReference type="InterPro" id="IPR050102">
    <property type="entry name" value="tRNA_sulfurtransferase_ThiI"/>
</dbReference>
<dbReference type="NCBIfam" id="TIGR00342">
    <property type="entry name" value="tRNA uracil 4-sulfurtransferase ThiI"/>
    <property type="match status" value="1"/>
</dbReference>
<dbReference type="PANTHER" id="PTHR43209">
    <property type="entry name" value="TRNA SULFURTRANSFERASE"/>
    <property type="match status" value="1"/>
</dbReference>
<dbReference type="PANTHER" id="PTHR43209:SF1">
    <property type="entry name" value="TRNA SULFURTRANSFERASE"/>
    <property type="match status" value="1"/>
</dbReference>
<dbReference type="Pfam" id="PF02568">
    <property type="entry name" value="ThiI"/>
    <property type="match status" value="1"/>
</dbReference>
<dbReference type="Pfam" id="PF22025">
    <property type="entry name" value="ThiI_fer"/>
    <property type="match status" value="1"/>
</dbReference>
<dbReference type="Pfam" id="PF02926">
    <property type="entry name" value="THUMP"/>
    <property type="match status" value="1"/>
</dbReference>
<dbReference type="SMART" id="SM00981">
    <property type="entry name" value="THUMP"/>
    <property type="match status" value="1"/>
</dbReference>
<dbReference type="SUPFAM" id="SSF52402">
    <property type="entry name" value="Adenine nucleotide alpha hydrolases-like"/>
    <property type="match status" value="1"/>
</dbReference>
<dbReference type="SUPFAM" id="SSF143437">
    <property type="entry name" value="THUMP domain-like"/>
    <property type="match status" value="1"/>
</dbReference>
<dbReference type="PROSITE" id="PS51165">
    <property type="entry name" value="THUMP"/>
    <property type="match status" value="1"/>
</dbReference>